<proteinExistence type="inferred from homology"/>
<name>CITD_ECO55</name>
<organism>
    <name type="scientific">Escherichia coli (strain 55989 / EAEC)</name>
    <dbReference type="NCBI Taxonomy" id="585055"/>
    <lineage>
        <taxon>Bacteria</taxon>
        <taxon>Pseudomonadati</taxon>
        <taxon>Pseudomonadota</taxon>
        <taxon>Gammaproteobacteria</taxon>
        <taxon>Enterobacterales</taxon>
        <taxon>Enterobacteriaceae</taxon>
        <taxon>Escherichia</taxon>
    </lineage>
</organism>
<keyword id="KW-0963">Cytoplasm</keyword>
<keyword id="KW-0597">Phosphoprotein</keyword>
<keyword id="KW-1185">Reference proteome</keyword>
<feature type="chain" id="PRO_1000148561" description="Citrate lyase acyl carrier protein">
    <location>
        <begin position="1"/>
        <end position="98"/>
    </location>
</feature>
<feature type="modified residue" description="O-(phosphoribosyl dephospho-coenzyme A)serine" evidence="1">
    <location>
        <position position="14"/>
    </location>
</feature>
<accession>B7L8K0</accession>
<reference key="1">
    <citation type="journal article" date="2009" name="PLoS Genet.">
        <title>Organised genome dynamics in the Escherichia coli species results in highly diverse adaptive paths.</title>
        <authorList>
            <person name="Touchon M."/>
            <person name="Hoede C."/>
            <person name="Tenaillon O."/>
            <person name="Barbe V."/>
            <person name="Baeriswyl S."/>
            <person name="Bidet P."/>
            <person name="Bingen E."/>
            <person name="Bonacorsi S."/>
            <person name="Bouchier C."/>
            <person name="Bouvet O."/>
            <person name="Calteau A."/>
            <person name="Chiapello H."/>
            <person name="Clermont O."/>
            <person name="Cruveiller S."/>
            <person name="Danchin A."/>
            <person name="Diard M."/>
            <person name="Dossat C."/>
            <person name="Karoui M.E."/>
            <person name="Frapy E."/>
            <person name="Garry L."/>
            <person name="Ghigo J.M."/>
            <person name="Gilles A.M."/>
            <person name="Johnson J."/>
            <person name="Le Bouguenec C."/>
            <person name="Lescat M."/>
            <person name="Mangenot S."/>
            <person name="Martinez-Jehanne V."/>
            <person name="Matic I."/>
            <person name="Nassif X."/>
            <person name="Oztas S."/>
            <person name="Petit M.A."/>
            <person name="Pichon C."/>
            <person name="Rouy Z."/>
            <person name="Ruf C.S."/>
            <person name="Schneider D."/>
            <person name="Tourret J."/>
            <person name="Vacherie B."/>
            <person name="Vallenet D."/>
            <person name="Medigue C."/>
            <person name="Rocha E.P.C."/>
            <person name="Denamur E."/>
        </authorList>
    </citation>
    <scope>NUCLEOTIDE SEQUENCE [LARGE SCALE GENOMIC DNA]</scope>
    <source>
        <strain>55989 / EAEC</strain>
    </source>
</reference>
<evidence type="ECO:0000255" key="1">
    <source>
        <dbReference type="HAMAP-Rule" id="MF_00805"/>
    </source>
</evidence>
<gene>
    <name evidence="1" type="primary">citD</name>
    <name type="ordered locus">EC55989_0609</name>
</gene>
<dbReference type="EMBL" id="CU928145">
    <property type="protein sequence ID" value="CAU96482.1"/>
    <property type="molecule type" value="Genomic_DNA"/>
</dbReference>
<dbReference type="RefSeq" id="WP_000700703.1">
    <property type="nucleotide sequence ID" value="NZ_CP028304.1"/>
</dbReference>
<dbReference type="SMR" id="B7L8K0"/>
<dbReference type="GeneID" id="93776868"/>
<dbReference type="KEGG" id="eck:EC55989_0609"/>
<dbReference type="HOGENOM" id="CLU_158489_0_0_6"/>
<dbReference type="Proteomes" id="UP000000746">
    <property type="component" value="Chromosome"/>
</dbReference>
<dbReference type="GO" id="GO:0005737">
    <property type="term" value="C:cytoplasm"/>
    <property type="evidence" value="ECO:0007669"/>
    <property type="project" value="UniProtKB-SubCell"/>
</dbReference>
<dbReference type="HAMAP" id="MF_00805">
    <property type="entry name" value="CitD"/>
    <property type="match status" value="1"/>
</dbReference>
<dbReference type="InterPro" id="IPR006495">
    <property type="entry name" value="CitD"/>
</dbReference>
<dbReference type="InterPro" id="IPR023439">
    <property type="entry name" value="Mal_deCO2ase/Cit_lyase_ACP"/>
</dbReference>
<dbReference type="NCBIfam" id="TIGR01608">
    <property type="entry name" value="citD"/>
    <property type="match status" value="1"/>
</dbReference>
<dbReference type="NCBIfam" id="NF009726">
    <property type="entry name" value="PRK13253.1"/>
    <property type="match status" value="1"/>
</dbReference>
<dbReference type="Pfam" id="PF06857">
    <property type="entry name" value="ACP"/>
    <property type="match status" value="1"/>
</dbReference>
<dbReference type="PIRSF" id="PIRSF002736">
    <property type="entry name" value="Citrt_lyas_gamma"/>
    <property type="match status" value="1"/>
</dbReference>
<comment type="function">
    <text evidence="1">Covalent carrier of the coenzyme of citrate lyase.</text>
</comment>
<comment type="subunit">
    <text evidence="1">Oligomer with a subunit composition of (alpha,beta,gamma)6.</text>
</comment>
<comment type="subcellular location">
    <subcellularLocation>
        <location evidence="1">Cytoplasm</location>
    </subcellularLocation>
</comment>
<comment type="similarity">
    <text evidence="1">Belongs to the CitD family.</text>
</comment>
<sequence>MKINQPAVAGTLESGDVMIRIAPLDTQDIDLQINSSVEKQFGDAIRTTILDVLARYNVRGVQLNVDDKGALDCILRARLEALLARASGIPALPWEDCQ</sequence>
<protein>
    <recommendedName>
        <fullName evidence="1">Citrate lyase acyl carrier protein</fullName>
    </recommendedName>
    <alternativeName>
        <fullName evidence="1">Citrate lyase gamma chain</fullName>
    </alternativeName>
</protein>